<dbReference type="EC" id="2.3.2.26" evidence="6 8 14"/>
<dbReference type="EMBL" id="EU489742">
    <property type="protein sequence ID" value="ACC99349.1"/>
    <property type="molecule type" value="mRNA"/>
</dbReference>
<dbReference type="EMBL" id="D28476">
    <property type="protein sequence ID" value="BAA05837.2"/>
    <property type="status" value="ALT_INIT"/>
    <property type="molecule type" value="mRNA"/>
</dbReference>
<dbReference type="EMBL" id="AC009973">
    <property type="protein sequence ID" value="AAY14755.1"/>
    <property type="status" value="ALT_SEQ"/>
    <property type="molecule type" value="Genomic_DNA"/>
</dbReference>
<dbReference type="EMBL" id="AC093384">
    <property type="protein sequence ID" value="AAY14681.1"/>
    <property type="status" value="ALT_SEQ"/>
    <property type="molecule type" value="Genomic_DNA"/>
</dbReference>
<dbReference type="EMBL" id="AC105380">
    <property type="status" value="NOT_ANNOTATED_CDS"/>
    <property type="molecule type" value="Genomic_DNA"/>
</dbReference>
<dbReference type="EMBL" id="BC114556">
    <property type="protein sequence ID" value="AAI14557.1"/>
    <property type="molecule type" value="mRNA"/>
</dbReference>
<dbReference type="EMBL" id="BC113891">
    <property type="protein sequence ID" value="AAI13892.1"/>
    <property type="molecule type" value="mRNA"/>
</dbReference>
<dbReference type="EMBL" id="L40383">
    <property type="protein sequence ID" value="AAC41731.1"/>
    <property type="molecule type" value="mRNA"/>
</dbReference>
<dbReference type="CCDS" id="CCDS33391.1">
    <molecule id="Q14669-1"/>
</dbReference>
<dbReference type="CCDS" id="CCDS63145.1">
    <molecule id="Q14669-4"/>
</dbReference>
<dbReference type="CCDS" id="CCDS63146.1">
    <molecule id="Q14669-3"/>
</dbReference>
<dbReference type="CCDS" id="CCDS92963.1">
    <molecule id="Q14669-2"/>
</dbReference>
<dbReference type="RefSeq" id="NP_001271143.1">
    <molecule id="Q14669-3"/>
    <property type="nucleotide sequence ID" value="NM_001284214.2"/>
</dbReference>
<dbReference type="RefSeq" id="NP_001271144.1">
    <molecule id="Q14669-2"/>
    <property type="nucleotide sequence ID" value="NM_001284215.2"/>
</dbReference>
<dbReference type="RefSeq" id="NP_001271145.1">
    <molecule id="Q14669-4"/>
    <property type="nucleotide sequence ID" value="NM_001284216.2"/>
</dbReference>
<dbReference type="RefSeq" id="NP_001335244.1">
    <molecule id="Q14669-3"/>
    <property type="nucleotide sequence ID" value="NM_001348315.2"/>
</dbReference>
<dbReference type="RefSeq" id="NP_001335245.1">
    <molecule id="Q14669-2"/>
    <property type="nucleotide sequence ID" value="NM_001348316.2"/>
</dbReference>
<dbReference type="RefSeq" id="NP_004229.1">
    <molecule id="Q14669-1"/>
    <property type="nucleotide sequence ID" value="NM_004238.3"/>
</dbReference>
<dbReference type="RefSeq" id="XP_047302314.1">
    <molecule id="Q14669-3"/>
    <property type="nucleotide sequence ID" value="XM_047446358.1"/>
</dbReference>
<dbReference type="RefSeq" id="XP_047302316.1">
    <molecule id="Q14669-3"/>
    <property type="nucleotide sequence ID" value="XM_047446360.1"/>
</dbReference>
<dbReference type="RefSeq" id="XP_054200558.1">
    <molecule id="Q14669-3"/>
    <property type="nucleotide sequence ID" value="XM_054344583.1"/>
</dbReference>
<dbReference type="RefSeq" id="XP_054200559.1">
    <molecule id="Q14669-3"/>
    <property type="nucleotide sequence ID" value="XM_054344584.1"/>
</dbReference>
<dbReference type="PDB" id="9BKR">
    <property type="method" value="X-ray"/>
    <property type="resolution" value="1.40 A"/>
    <property type="chains" value="A=755-806"/>
</dbReference>
<dbReference type="PDB" id="9BKS">
    <property type="method" value="X-ray"/>
    <property type="resolution" value="1.17 A"/>
    <property type="chains" value="A=755-806"/>
</dbReference>
<dbReference type="PDBsum" id="9BKR"/>
<dbReference type="PDBsum" id="9BKS"/>
<dbReference type="SMR" id="Q14669"/>
<dbReference type="BioGRID" id="114731">
    <property type="interactions" value="243"/>
</dbReference>
<dbReference type="DIP" id="DIP-58584N"/>
<dbReference type="FunCoup" id="Q14669">
    <property type="interactions" value="4767"/>
</dbReference>
<dbReference type="IntAct" id="Q14669">
    <property type="interactions" value="119"/>
</dbReference>
<dbReference type="MINT" id="Q14669"/>
<dbReference type="STRING" id="9606.ENSP00000373696"/>
<dbReference type="GlyGen" id="Q14669">
    <property type="glycosylation" value="3 sites, 1 N-linked glycan (1 site), 1 O-linked glycan (2 sites)"/>
</dbReference>
<dbReference type="iPTMnet" id="Q14669"/>
<dbReference type="MetOSite" id="Q14669"/>
<dbReference type="PhosphoSitePlus" id="Q14669"/>
<dbReference type="SwissPalm" id="Q14669"/>
<dbReference type="BioMuta" id="TRIP12"/>
<dbReference type="DMDM" id="2499839"/>
<dbReference type="jPOST" id="Q14669"/>
<dbReference type="MassIVE" id="Q14669"/>
<dbReference type="PaxDb" id="9606-ENSP00000373696"/>
<dbReference type="PeptideAtlas" id="Q14669"/>
<dbReference type="ProteomicsDB" id="60100">
    <molecule id="Q14669-1"/>
</dbReference>
<dbReference type="ProteomicsDB" id="60316"/>
<dbReference type="ProteomicsDB" id="60326"/>
<dbReference type="Pumba" id="Q14669"/>
<dbReference type="Antibodypedia" id="34396">
    <property type="antibodies" value="69 antibodies from 23 providers"/>
</dbReference>
<dbReference type="DNASU" id="9320"/>
<dbReference type="Ensembl" id="ENST00000283943.9">
    <molecule id="Q14669-1"/>
    <property type="protein sequence ID" value="ENSP00000283943.4"/>
    <property type="gene ID" value="ENSG00000153827.15"/>
</dbReference>
<dbReference type="Ensembl" id="ENST00000389044.8">
    <molecule id="Q14669-3"/>
    <property type="protein sequence ID" value="ENSP00000373696.4"/>
    <property type="gene ID" value="ENSG00000153827.15"/>
</dbReference>
<dbReference type="Ensembl" id="ENST00000389045.7">
    <molecule id="Q14669-4"/>
    <property type="protein sequence ID" value="ENSP00000373697.3"/>
    <property type="gene ID" value="ENSG00000153827.15"/>
</dbReference>
<dbReference type="Ensembl" id="ENST00000704580.1">
    <molecule id="Q14669-2"/>
    <property type="protein sequence ID" value="ENSP00000515955.1"/>
    <property type="gene ID" value="ENSG00000153827.15"/>
</dbReference>
<dbReference type="GeneID" id="9320"/>
<dbReference type="KEGG" id="hsa:9320"/>
<dbReference type="UCSC" id="uc002vpw.3">
    <molecule id="Q14669-1"/>
    <property type="organism name" value="human"/>
</dbReference>
<dbReference type="AGR" id="HGNC:12306"/>
<dbReference type="CTD" id="9320"/>
<dbReference type="DisGeNET" id="9320"/>
<dbReference type="GeneCards" id="TRIP12"/>
<dbReference type="HGNC" id="HGNC:12306">
    <property type="gene designation" value="TRIP12"/>
</dbReference>
<dbReference type="HPA" id="ENSG00000153827">
    <property type="expression patterns" value="Low tissue specificity"/>
</dbReference>
<dbReference type="MalaCards" id="TRIP12"/>
<dbReference type="MIM" id="604506">
    <property type="type" value="gene"/>
</dbReference>
<dbReference type="MIM" id="617752">
    <property type="type" value="phenotype"/>
</dbReference>
<dbReference type="neXtProt" id="NX_Q14669"/>
<dbReference type="OpenTargets" id="ENSG00000153827"/>
<dbReference type="Orphanet" id="528084">
    <property type="disease" value="Non-specific syndromic intellectual disability"/>
</dbReference>
<dbReference type="PharmGKB" id="PA36985"/>
<dbReference type="VEuPathDB" id="HostDB:ENSG00000153827"/>
<dbReference type="eggNOG" id="KOG0168">
    <property type="taxonomic scope" value="Eukaryota"/>
</dbReference>
<dbReference type="eggNOG" id="KOG0170">
    <property type="taxonomic scope" value="Eukaryota"/>
</dbReference>
<dbReference type="GeneTree" id="ENSGT00940000156517"/>
<dbReference type="HOGENOM" id="CLU_000366_2_0_1"/>
<dbReference type="InParanoid" id="Q14669"/>
<dbReference type="OrthoDB" id="271273at2759"/>
<dbReference type="PAN-GO" id="Q14669">
    <property type="GO annotations" value="7 GO annotations based on evolutionary models"/>
</dbReference>
<dbReference type="PhylomeDB" id="Q14669"/>
<dbReference type="TreeFam" id="TF323674"/>
<dbReference type="BRENDA" id="2.3.2.26">
    <property type="organism ID" value="2681"/>
</dbReference>
<dbReference type="PathwayCommons" id="Q14669"/>
<dbReference type="Reactome" id="R-HSA-983168">
    <property type="pathway name" value="Antigen processing: Ubiquitination &amp; Proteasome degradation"/>
</dbReference>
<dbReference type="SignaLink" id="Q14669"/>
<dbReference type="SIGNOR" id="Q14669"/>
<dbReference type="UniPathway" id="UPA00143"/>
<dbReference type="BioGRID-ORCS" id="9320">
    <property type="hits" value="87 hits in 1221 CRISPR screens"/>
</dbReference>
<dbReference type="ChiTaRS" id="TRIP12">
    <property type="organism name" value="human"/>
</dbReference>
<dbReference type="GeneWiki" id="TRIP12"/>
<dbReference type="GenomeRNAi" id="9320"/>
<dbReference type="Pharos" id="Q14669">
    <property type="development level" value="Tbio"/>
</dbReference>
<dbReference type="PRO" id="PR:Q14669"/>
<dbReference type="Proteomes" id="UP000005640">
    <property type="component" value="Chromosome 2"/>
</dbReference>
<dbReference type="RNAct" id="Q14669">
    <property type="molecule type" value="protein"/>
</dbReference>
<dbReference type="Bgee" id="ENSG00000153827">
    <property type="expression patterns" value="Expressed in calcaneal tendon and 212 other cell types or tissues"/>
</dbReference>
<dbReference type="ExpressionAtlas" id="Q14669">
    <property type="expression patterns" value="baseline and differential"/>
</dbReference>
<dbReference type="GO" id="GO:0005829">
    <property type="term" value="C:cytosol"/>
    <property type="evidence" value="ECO:0000304"/>
    <property type="project" value="Reactome"/>
</dbReference>
<dbReference type="GO" id="GO:0016607">
    <property type="term" value="C:nuclear speck"/>
    <property type="evidence" value="ECO:0000314"/>
    <property type="project" value="HPA"/>
</dbReference>
<dbReference type="GO" id="GO:0005654">
    <property type="term" value="C:nucleoplasm"/>
    <property type="evidence" value="ECO:0000314"/>
    <property type="project" value="UniProtKB"/>
</dbReference>
<dbReference type="GO" id="GO:0005634">
    <property type="term" value="C:nucleus"/>
    <property type="evidence" value="ECO:0007005"/>
    <property type="project" value="UniProtKB"/>
</dbReference>
<dbReference type="GO" id="GO:0046966">
    <property type="term" value="F:nuclear thyroid hormone receptor binding"/>
    <property type="evidence" value="ECO:0000314"/>
    <property type="project" value="UniProtKB"/>
</dbReference>
<dbReference type="GO" id="GO:0061630">
    <property type="term" value="F:ubiquitin protein ligase activity"/>
    <property type="evidence" value="ECO:0000314"/>
    <property type="project" value="UniProtKB"/>
</dbReference>
<dbReference type="GO" id="GO:0006974">
    <property type="term" value="P:DNA damage response"/>
    <property type="evidence" value="ECO:0000318"/>
    <property type="project" value="GO_Central"/>
</dbReference>
<dbReference type="GO" id="GO:0006281">
    <property type="term" value="P:DNA repair"/>
    <property type="evidence" value="ECO:0007669"/>
    <property type="project" value="UniProtKB-KW"/>
</dbReference>
<dbReference type="GO" id="GO:0140861">
    <property type="term" value="P:DNA repair-dependent chromatin remodeling"/>
    <property type="evidence" value="ECO:0000315"/>
    <property type="project" value="UniProtKB"/>
</dbReference>
<dbReference type="GO" id="GO:0033696">
    <property type="term" value="P:heterochromatin boundary formation"/>
    <property type="evidence" value="ECO:0000315"/>
    <property type="project" value="UniProtKB"/>
</dbReference>
<dbReference type="GO" id="GO:0043161">
    <property type="term" value="P:proteasome-mediated ubiquitin-dependent protein catabolic process"/>
    <property type="evidence" value="ECO:0000318"/>
    <property type="project" value="GO_Central"/>
</dbReference>
<dbReference type="GO" id="GO:0000209">
    <property type="term" value="P:protein polyubiquitination"/>
    <property type="evidence" value="ECO:0000314"/>
    <property type="project" value="UniProtKB"/>
</dbReference>
<dbReference type="GO" id="GO:0045995">
    <property type="term" value="P:regulation of embryonic development"/>
    <property type="evidence" value="ECO:0000250"/>
    <property type="project" value="UniProtKB"/>
</dbReference>
<dbReference type="GO" id="GO:0006511">
    <property type="term" value="P:ubiquitin-dependent protein catabolic process"/>
    <property type="evidence" value="ECO:0000314"/>
    <property type="project" value="UniProtKB"/>
</dbReference>
<dbReference type="CDD" id="cd00078">
    <property type="entry name" value="HECTc"/>
    <property type="match status" value="1"/>
</dbReference>
<dbReference type="FunFam" id="3.30.2160.10:FF:000013">
    <property type="entry name" value="E3 ubiquitin-protein ligase TRIP12 isoform X1"/>
    <property type="match status" value="1"/>
</dbReference>
<dbReference type="FunFam" id="3.30.2410.10:FF:000005">
    <property type="entry name" value="E3 ubiquitin-protein ligase TRIP12 isoform X1"/>
    <property type="match status" value="1"/>
</dbReference>
<dbReference type="FunFam" id="3.90.1750.10:FF:000006">
    <property type="entry name" value="E3 ubiquitin-protein ligase TRIP12 isoform X1"/>
    <property type="match status" value="1"/>
</dbReference>
<dbReference type="FunFam" id="1.25.10.10:FF:000018">
    <property type="entry name" value="E3 ubiquitin-protein ligase TRIP12 isoform X3"/>
    <property type="match status" value="1"/>
</dbReference>
<dbReference type="Gene3D" id="3.30.2410.10">
    <property type="entry name" value="Hect, E3 ligase catalytic domain"/>
    <property type="match status" value="1"/>
</dbReference>
<dbReference type="Gene3D" id="3.90.1750.10">
    <property type="entry name" value="Hect, E3 ligase catalytic domains"/>
    <property type="match status" value="1"/>
</dbReference>
<dbReference type="Gene3D" id="1.25.10.10">
    <property type="entry name" value="Leucine-rich Repeat Variant"/>
    <property type="match status" value="1"/>
</dbReference>
<dbReference type="InterPro" id="IPR011989">
    <property type="entry name" value="ARM-like"/>
</dbReference>
<dbReference type="InterPro" id="IPR016024">
    <property type="entry name" value="ARM-type_fold"/>
</dbReference>
<dbReference type="InterPro" id="IPR000569">
    <property type="entry name" value="HECT_dom"/>
</dbReference>
<dbReference type="InterPro" id="IPR035983">
    <property type="entry name" value="Hect_E3_ubiquitin_ligase"/>
</dbReference>
<dbReference type="InterPro" id="IPR045322">
    <property type="entry name" value="HECTD1/TRIP12-like"/>
</dbReference>
<dbReference type="InterPro" id="IPR004170">
    <property type="entry name" value="WWE_dom"/>
</dbReference>
<dbReference type="InterPro" id="IPR037197">
    <property type="entry name" value="WWE_dom_sf"/>
</dbReference>
<dbReference type="PANTHER" id="PTHR45670">
    <property type="entry name" value="E3 UBIQUITIN-PROTEIN LIGASE TRIP12"/>
    <property type="match status" value="1"/>
</dbReference>
<dbReference type="PANTHER" id="PTHR45670:SF13">
    <property type="entry name" value="E3 UBIQUITIN-PROTEIN LIGASE TRIP12"/>
    <property type="match status" value="1"/>
</dbReference>
<dbReference type="Pfam" id="PF00632">
    <property type="entry name" value="HECT"/>
    <property type="match status" value="1"/>
</dbReference>
<dbReference type="SMART" id="SM00119">
    <property type="entry name" value="HECTc"/>
    <property type="match status" value="1"/>
</dbReference>
<dbReference type="SUPFAM" id="SSF48371">
    <property type="entry name" value="ARM repeat"/>
    <property type="match status" value="1"/>
</dbReference>
<dbReference type="SUPFAM" id="SSF56204">
    <property type="entry name" value="Hect, E3 ligase catalytic domain"/>
    <property type="match status" value="1"/>
</dbReference>
<dbReference type="SUPFAM" id="SSF117839">
    <property type="entry name" value="WWE domain"/>
    <property type="match status" value="1"/>
</dbReference>
<dbReference type="PROSITE" id="PS50237">
    <property type="entry name" value="HECT"/>
    <property type="match status" value="1"/>
</dbReference>
<dbReference type="PROSITE" id="PS50918">
    <property type="entry name" value="WWE"/>
    <property type="match status" value="1"/>
</dbReference>
<accession>Q14669</accession>
<accession>D4HL82</accession>
<accession>Q14CA3</accession>
<accession>Q14CF1</accession>
<accession>Q15644</accession>
<accession>Q53R87</accession>
<accession>Q53TE7</accession>
<reference key="1">
    <citation type="journal article" date="2010" name="Nature">
        <title>Transcription-independent ARF regulation in oncogenic stress-mediated p53 responses.</title>
        <authorList>
            <person name="Chen D."/>
            <person name="Shan J."/>
            <person name="Zhu W.G."/>
            <person name="Qin J."/>
            <person name="Gu W."/>
        </authorList>
    </citation>
    <scope>NUCLEOTIDE SEQUENCE [MRNA] (ISOFORM 2)</scope>
    <scope>FUNCTION</scope>
    <scope>SUBCELLULAR LOCATION</scope>
    <scope>INTERACTION WITH MYC AND CDKN2A</scope>
    <scope>MUTAGENESIS OF CYS-1959</scope>
</reference>
<reference key="2">
    <citation type="journal article" date="1994" name="DNA Res.">
        <title>Prediction of the coding sequences of unidentified human genes. II. The coding sequences of 40 new genes (KIAA0041-KIAA0080) deduced by analysis of cDNA clones from human cell line KG-1.</title>
        <authorList>
            <person name="Nomura N."/>
            <person name="Nagase T."/>
            <person name="Miyajima N."/>
            <person name="Sazuka T."/>
            <person name="Tanaka A."/>
            <person name="Sato S."/>
            <person name="Seki N."/>
            <person name="Kawarabayasi Y."/>
            <person name="Ishikawa K."/>
            <person name="Tabata S."/>
        </authorList>
    </citation>
    <scope>NUCLEOTIDE SEQUENCE [LARGE SCALE MRNA] (ISOFORM 1)</scope>
    <source>
        <tissue>Bone marrow</tissue>
    </source>
</reference>
<reference key="3">
    <citation type="journal article" date="2005" name="Nature">
        <title>Generation and annotation of the DNA sequences of human chromosomes 2 and 4.</title>
        <authorList>
            <person name="Hillier L.W."/>
            <person name="Graves T.A."/>
            <person name="Fulton R.S."/>
            <person name="Fulton L.A."/>
            <person name="Pepin K.H."/>
            <person name="Minx P."/>
            <person name="Wagner-McPherson C."/>
            <person name="Layman D."/>
            <person name="Wylie K."/>
            <person name="Sekhon M."/>
            <person name="Becker M.C."/>
            <person name="Fewell G.A."/>
            <person name="Delehaunty K.D."/>
            <person name="Miner T.L."/>
            <person name="Nash W.E."/>
            <person name="Kremitzki C."/>
            <person name="Oddy L."/>
            <person name="Du H."/>
            <person name="Sun H."/>
            <person name="Bradshaw-Cordum H."/>
            <person name="Ali J."/>
            <person name="Carter J."/>
            <person name="Cordes M."/>
            <person name="Harris A."/>
            <person name="Isak A."/>
            <person name="van Brunt A."/>
            <person name="Nguyen C."/>
            <person name="Du F."/>
            <person name="Courtney L."/>
            <person name="Kalicki J."/>
            <person name="Ozersky P."/>
            <person name="Abbott S."/>
            <person name="Armstrong J."/>
            <person name="Belter E.A."/>
            <person name="Caruso L."/>
            <person name="Cedroni M."/>
            <person name="Cotton M."/>
            <person name="Davidson T."/>
            <person name="Desai A."/>
            <person name="Elliott G."/>
            <person name="Erb T."/>
            <person name="Fronick C."/>
            <person name="Gaige T."/>
            <person name="Haakenson W."/>
            <person name="Haglund K."/>
            <person name="Holmes A."/>
            <person name="Harkins R."/>
            <person name="Kim K."/>
            <person name="Kruchowski S.S."/>
            <person name="Strong C.M."/>
            <person name="Grewal N."/>
            <person name="Goyea E."/>
            <person name="Hou S."/>
            <person name="Levy A."/>
            <person name="Martinka S."/>
            <person name="Mead K."/>
            <person name="McLellan M.D."/>
            <person name="Meyer R."/>
            <person name="Randall-Maher J."/>
            <person name="Tomlinson C."/>
            <person name="Dauphin-Kohlberg S."/>
            <person name="Kozlowicz-Reilly A."/>
            <person name="Shah N."/>
            <person name="Swearengen-Shahid S."/>
            <person name="Snider J."/>
            <person name="Strong J.T."/>
            <person name="Thompson J."/>
            <person name="Yoakum M."/>
            <person name="Leonard S."/>
            <person name="Pearman C."/>
            <person name="Trani L."/>
            <person name="Radionenko M."/>
            <person name="Waligorski J.E."/>
            <person name="Wang C."/>
            <person name="Rock S.M."/>
            <person name="Tin-Wollam A.-M."/>
            <person name="Maupin R."/>
            <person name="Latreille P."/>
            <person name="Wendl M.C."/>
            <person name="Yang S.-P."/>
            <person name="Pohl C."/>
            <person name="Wallis J.W."/>
            <person name="Spieth J."/>
            <person name="Bieri T.A."/>
            <person name="Berkowicz N."/>
            <person name="Nelson J.O."/>
            <person name="Osborne J."/>
            <person name="Ding L."/>
            <person name="Meyer R."/>
            <person name="Sabo A."/>
            <person name="Shotland Y."/>
            <person name="Sinha P."/>
            <person name="Wohldmann P.E."/>
            <person name="Cook L.L."/>
            <person name="Hickenbotham M.T."/>
            <person name="Eldred J."/>
            <person name="Williams D."/>
            <person name="Jones T.A."/>
            <person name="She X."/>
            <person name="Ciccarelli F.D."/>
            <person name="Izaurralde E."/>
            <person name="Taylor J."/>
            <person name="Schmutz J."/>
            <person name="Myers R.M."/>
            <person name="Cox D.R."/>
            <person name="Huang X."/>
            <person name="McPherson J.D."/>
            <person name="Mardis E.R."/>
            <person name="Clifton S.W."/>
            <person name="Warren W.C."/>
            <person name="Chinwalla A.T."/>
            <person name="Eddy S.R."/>
            <person name="Marra M.A."/>
            <person name="Ovcharenko I."/>
            <person name="Furey T.S."/>
            <person name="Miller W."/>
            <person name="Eichler E.E."/>
            <person name="Bork P."/>
            <person name="Suyama M."/>
            <person name="Torrents D."/>
            <person name="Waterston R.H."/>
            <person name="Wilson R.K."/>
        </authorList>
    </citation>
    <scope>NUCLEOTIDE SEQUENCE [LARGE SCALE GENOMIC DNA]</scope>
</reference>
<reference key="4">
    <citation type="journal article" date="2004" name="Genome Res.">
        <title>The status, quality, and expansion of the NIH full-length cDNA project: the Mammalian Gene Collection (MGC).</title>
        <authorList>
            <consortium name="The MGC Project Team"/>
        </authorList>
    </citation>
    <scope>NUCLEOTIDE SEQUENCE [LARGE SCALE MRNA] (ISOFORMS 3 AND 4)</scope>
</reference>
<reference key="5">
    <citation type="journal article" date="1995" name="Mol. Endocrinol.">
        <title>Two classes of proteins dependent on either the presence or absence of thyroid hormone for interaction with the thyroid hormone receptor.</title>
        <authorList>
            <person name="Lee J.W."/>
            <person name="Choi H.-S."/>
            <person name="Gyuris J."/>
            <person name="Brent R."/>
            <person name="Moore D.D."/>
        </authorList>
    </citation>
    <scope>NUCLEOTIDE SEQUENCE [MRNA] OF 1801-1992</scope>
</reference>
<reference key="6">
    <citation type="journal article" date="2006" name="Cell">
        <title>Global, in vivo, and site-specific phosphorylation dynamics in signaling networks.</title>
        <authorList>
            <person name="Olsen J.V."/>
            <person name="Blagoev B."/>
            <person name="Gnad F."/>
            <person name="Macek B."/>
            <person name="Kumar C."/>
            <person name="Mortensen P."/>
            <person name="Mann M."/>
        </authorList>
    </citation>
    <scope>PHOSPHORYLATION [LARGE SCALE ANALYSIS] AT SER-1317</scope>
    <scope>IDENTIFICATION BY MASS SPECTROMETRY [LARGE SCALE ANALYSIS]</scope>
    <source>
        <tissue>Cervix carcinoma</tissue>
    </source>
</reference>
<reference key="7">
    <citation type="journal article" date="2008" name="Biochem. Biophys. Res. Commun.">
        <title>TRIP12 functions as an E3 ubiquitin ligase of APP-BP1.</title>
        <authorList>
            <person name="Park Y."/>
            <person name="Yoon S.K."/>
            <person name="Yoon J.B."/>
        </authorList>
    </citation>
    <scope>FUNCTION</scope>
</reference>
<reference key="8">
    <citation type="journal article" date="2008" name="J. Proteome Res.">
        <title>Combining protein-based IMAC, peptide-based IMAC, and MudPIT for efficient phosphoproteomic analysis.</title>
        <authorList>
            <person name="Cantin G.T."/>
            <person name="Yi W."/>
            <person name="Lu B."/>
            <person name="Park S.K."/>
            <person name="Xu T."/>
            <person name="Lee J.-D."/>
            <person name="Yates J.R. III"/>
        </authorList>
    </citation>
    <scope>IDENTIFICATION BY MASS SPECTROMETRY [LARGE SCALE ANALYSIS]</scope>
    <source>
        <tissue>Cervix carcinoma</tissue>
    </source>
</reference>
<reference key="9">
    <citation type="journal article" date="2008" name="Proc. Natl. Acad. Sci. U.S.A.">
        <title>A quantitative atlas of mitotic phosphorylation.</title>
        <authorList>
            <person name="Dephoure N."/>
            <person name="Zhou C."/>
            <person name="Villen J."/>
            <person name="Beausoleil S.A."/>
            <person name="Bakalarski C.E."/>
            <person name="Elledge S.J."/>
            <person name="Gygi S.P."/>
        </authorList>
    </citation>
    <scope>PHOSPHORYLATION [LARGE SCALE ANALYSIS] AT SER-310; SER-312; SER-991; SER-997; SER-1317 AND SER-1322</scope>
    <scope>IDENTIFICATION BY MASS SPECTROMETRY [LARGE SCALE ANALYSIS]</scope>
    <source>
        <tissue>Cervix carcinoma</tissue>
    </source>
</reference>
<reference key="10">
    <citation type="journal article" date="2009" name="Anal. Chem.">
        <title>Lys-N and trypsin cover complementary parts of the phosphoproteome in a refined SCX-based approach.</title>
        <authorList>
            <person name="Gauci S."/>
            <person name="Helbig A.O."/>
            <person name="Slijper M."/>
            <person name="Krijgsveld J."/>
            <person name="Heck A.J."/>
            <person name="Mohammed S."/>
        </authorList>
    </citation>
    <scope>IDENTIFICATION BY MASS SPECTROMETRY [LARGE SCALE ANALYSIS]</scope>
</reference>
<reference key="11">
    <citation type="journal article" date="2009" name="J. Biol. Chem.">
        <title>The HECT domain of TRIP12 ubiquitinates substrates of the ubiquitin fusion degradation pathway.</title>
        <authorList>
            <person name="Park Y."/>
            <person name="Yoon S.K."/>
            <person name="Yoon J.B."/>
        </authorList>
    </citation>
    <scope>FUNCTION</scope>
</reference>
<reference key="12">
    <citation type="journal article" date="2009" name="Sci. Signal.">
        <title>Quantitative phosphoproteomic analysis of T cell receptor signaling reveals system-wide modulation of protein-protein interactions.</title>
        <authorList>
            <person name="Mayya V."/>
            <person name="Lundgren D.H."/>
            <person name="Hwang S.-I."/>
            <person name="Rezaul K."/>
            <person name="Wu L."/>
            <person name="Eng J.K."/>
            <person name="Rodionov V."/>
            <person name="Han D.K."/>
        </authorList>
    </citation>
    <scope>PHOSPHORYLATION [LARGE SCALE ANALYSIS] AT SER-312; SER-991; SER-1317 AND SER-1322</scope>
    <scope>IDENTIFICATION BY MASS SPECTROMETRY [LARGE SCALE ANALYSIS]</scope>
    <source>
        <tissue>Leukemic T-cell</tissue>
    </source>
</reference>
<reference key="13">
    <citation type="journal article" date="2010" name="J. Biol. Chem.">
        <title>Ubiquitin-dependent and ubiquitin-independent control of subunit stoichiometry in the SWI/SNF complex.</title>
        <authorList>
            <person name="Keppler B.R."/>
            <person name="Archer T.K."/>
        </authorList>
    </citation>
    <scope>FUNCTION</scope>
    <scope>INTERACTION WITH SMARCC1</scope>
</reference>
<reference key="14">
    <citation type="journal article" date="2010" name="Sci. Signal.">
        <title>Quantitative phosphoproteomics reveals widespread full phosphorylation site occupancy during mitosis.</title>
        <authorList>
            <person name="Olsen J.V."/>
            <person name="Vermeulen M."/>
            <person name="Santamaria A."/>
            <person name="Kumar C."/>
            <person name="Miller M.L."/>
            <person name="Jensen L.J."/>
            <person name="Gnad F."/>
            <person name="Cox J."/>
            <person name="Jensen T.S."/>
            <person name="Nigg E.A."/>
            <person name="Brunak S."/>
            <person name="Mann M."/>
        </authorList>
    </citation>
    <scope>PHOSPHORYLATION [LARGE SCALE ANALYSIS] AT SER-77; SER-312 AND SER-942</scope>
    <scope>IDENTIFICATION BY MASS SPECTROMETRY [LARGE SCALE ANALYSIS]</scope>
    <source>
        <tissue>Cervix carcinoma</tissue>
    </source>
</reference>
<reference key="15">
    <citation type="journal article" date="2011" name="BMC Syst. Biol.">
        <title>Initial characterization of the human central proteome.</title>
        <authorList>
            <person name="Burkard T.R."/>
            <person name="Planyavsky M."/>
            <person name="Kaupe I."/>
            <person name="Breitwieser F.P."/>
            <person name="Buerckstuemmer T."/>
            <person name="Bennett K.L."/>
            <person name="Superti-Furga G."/>
            <person name="Colinge J."/>
        </authorList>
    </citation>
    <scope>IDENTIFICATION BY MASS SPECTROMETRY [LARGE SCALE ANALYSIS]</scope>
</reference>
<reference key="16">
    <citation type="journal article" date="2011" name="Sci. Signal.">
        <title>System-wide temporal characterization of the proteome and phosphoproteome of human embryonic stem cell differentiation.</title>
        <authorList>
            <person name="Rigbolt K.T."/>
            <person name="Prokhorova T.A."/>
            <person name="Akimov V."/>
            <person name="Henningsen J."/>
            <person name="Johansen P.T."/>
            <person name="Kratchmarova I."/>
            <person name="Kassem M."/>
            <person name="Mann M."/>
            <person name="Olsen J.V."/>
            <person name="Blagoev B."/>
        </authorList>
    </citation>
    <scope>ACETYLATION [LARGE SCALE ANALYSIS] AT SER-2</scope>
    <scope>PHOSPHORYLATION [LARGE SCALE ANALYSIS] AT SER-12; SER-310; SER-1030; SER-1317 AND SER-1322</scope>
    <scope>CLEAVAGE OF INITIATOR METHIONINE [LARGE SCALE ANALYSIS]</scope>
    <scope>IDENTIFICATION BY MASS SPECTROMETRY [LARGE SCALE ANALYSIS]</scope>
</reference>
<reference key="17">
    <citation type="journal article" date="2012" name="Cell">
        <title>TRIP12 and UBR5 Suppress Spreading of Chromatin Ubiquitylation at Damaged Chromosomes.</title>
        <authorList>
            <person name="Gudjonsson T."/>
            <person name="Altmeyer M."/>
            <person name="Savic V."/>
            <person name="Toledo L."/>
            <person name="Dinant C."/>
            <person name="Grofte M."/>
            <person name="Bartkova J."/>
            <person name="Poulsen M."/>
            <person name="Oka Y."/>
            <person name="Bekker-Jensen S."/>
            <person name="Mailand N."/>
            <person name="Neumann B."/>
            <person name="Heriche J.K."/>
            <person name="Shearer R."/>
            <person name="Saunders D."/>
            <person name="Bartek J."/>
            <person name="Lukas J."/>
            <person name="Lukas C."/>
        </authorList>
    </citation>
    <scope>FUNCTION</scope>
</reference>
<reference key="18">
    <citation type="journal article" date="2014" name="Cell">
        <authorList>
            <person name="Gudjonsson T."/>
            <person name="Altmeyer M."/>
            <person name="Savic V."/>
            <person name="Toledo L."/>
            <person name="Dinant C."/>
            <person name="Grofte M."/>
            <person name="Bartkova J."/>
            <person name="Poulsen M."/>
            <person name="Oka Y."/>
            <person name="Bekker-Jensen S."/>
            <person name="Mailand N."/>
            <person name="Neumann B."/>
            <person name="Heriche J.K."/>
            <person name="Shearer R."/>
            <person name="Saunders D."/>
            <person name="Bartek J."/>
            <person name="Lukas J."/>
            <person name="Lukas C."/>
        </authorList>
    </citation>
    <scope>ERRATUM OF PUBMED:22884692</scope>
</reference>
<reference key="19">
    <citation type="journal article" date="2012" name="Nat. Cell Biol.">
        <title>TRADD contributes to tumour suppression by regulating ULF-dependent p19Arf ubiquitylation.</title>
        <authorList>
            <person name="Chio I.I."/>
            <person name="Sasaki M."/>
            <person name="Ghazarian D."/>
            <person name="Moreno J."/>
            <person name="Done S."/>
            <person name="Ueda T."/>
            <person name="Inoue S."/>
            <person name="Chang Y.L."/>
            <person name="Chen N.J."/>
            <person name="Mak T.W."/>
        </authorList>
    </citation>
    <scope>INTERACTION WITH TRADD</scope>
</reference>
<reference key="20">
    <citation type="journal article" date="2013" name="J. Proteome Res.">
        <title>Toward a comprehensive characterization of a human cancer cell phosphoproteome.</title>
        <authorList>
            <person name="Zhou H."/>
            <person name="Di Palma S."/>
            <person name="Preisinger C."/>
            <person name="Peng M."/>
            <person name="Polat A.N."/>
            <person name="Heck A.J."/>
            <person name="Mohammed S."/>
        </authorList>
    </citation>
    <scope>PHOSPHORYLATION [LARGE SCALE ANALYSIS] AT SER-12; SER-100; SER-312; SER-942; SER-991 AND SER-997</scope>
    <scope>IDENTIFICATION BY MASS SPECTROMETRY [LARGE SCALE ANALYSIS]</scope>
    <source>
        <tissue>Cervix carcinoma</tissue>
        <tissue>Erythroleukemia</tissue>
    </source>
</reference>
<reference key="21">
    <citation type="journal article" date="2014" name="J. Proteomics">
        <title>An enzyme assisted RP-RPLC approach for in-depth analysis of human liver phosphoproteome.</title>
        <authorList>
            <person name="Bian Y."/>
            <person name="Song C."/>
            <person name="Cheng K."/>
            <person name="Dong M."/>
            <person name="Wang F."/>
            <person name="Huang J."/>
            <person name="Sun D."/>
            <person name="Wang L."/>
            <person name="Ye M."/>
            <person name="Zou H."/>
        </authorList>
    </citation>
    <scope>PHOSPHORYLATION [LARGE SCALE ANALYSIS] AT SER-1317 AND SER-1322</scope>
    <scope>IDENTIFICATION BY MASS SPECTROMETRY [LARGE SCALE ANALYSIS]</scope>
    <source>
        <tissue>Liver</tissue>
    </source>
</reference>
<reference key="22">
    <citation type="journal article" date="2017" name="Hum. Genet.">
        <title>Identification of new TRIP12 variants and detailed clinical evaluation of individuals with non-syndromic intellectual disability with or without autism.</title>
        <authorList>
            <person name="Bramswig N.C."/>
            <person name="Luedecke H.J."/>
            <person name="Pettersson M."/>
            <person name="Albrecht B."/>
            <person name="Bernier R.A."/>
            <person name="Cremer K."/>
            <person name="Eichler E.E."/>
            <person name="Falkenstein D."/>
            <person name="Gerdts J."/>
            <person name="Jansen S."/>
            <person name="Kuechler A."/>
            <person name="Kvarnung M."/>
            <person name="Lindstrand A."/>
            <person name="Nilsson D."/>
            <person name="Nordgren A."/>
            <person name="Pfundt R."/>
            <person name="Spruijt L."/>
            <person name="Surowy H.M."/>
            <person name="de Vries B.B."/>
            <person name="Wieland T."/>
            <person name="Engels H."/>
            <person name="Strom T.M."/>
            <person name="Kleefstra T."/>
            <person name="Wieczorek D."/>
        </authorList>
    </citation>
    <scope>INVOLVEMENT IN CLABARS</scope>
    <scope>VARIANTS CLABARS LEU-5; 338-ARG--SER-1992 DEL; 352-ARG--SER-1992 DEL; VAL-761; HIS-1557; GLN-1595 AND LEU-1840</scope>
</reference>
<reference key="23">
    <citation type="journal article" date="2017" name="Hum. Genet.">
        <title>Haploinsufficiency of the E3 ubiquitin-protein ligase gene TRIP12 causes intellectual disability with or without autism spectrum disorders, speech delay, and dysmorphic features.</title>
        <authorList>
            <person name="Zhang J."/>
            <person name="Gambin T."/>
            <person name="Yuan B."/>
            <person name="Szafranski P."/>
            <person name="Rosenfeld J.A."/>
            <person name="Balwi M.A."/>
            <person name="Alswaid A."/>
            <person name="Al-Gazali L."/>
            <person name="Shamsi A.M.A."/>
            <person name="Komara M."/>
            <person name="Ali B.R."/>
            <person name="Roeder E."/>
            <person name="McAuley L."/>
            <person name="Roy D.S."/>
            <person name="Manchester D.K."/>
            <person name="Magoulas P."/>
            <person name="King L.E."/>
            <person name="Hannig V."/>
            <person name="Bonneau D."/>
            <person name="Denomme-Pichon A.S."/>
            <person name="Charif M."/>
            <person name="Besnard T."/>
            <person name="Bezieau S."/>
            <person name="Cogne B."/>
            <person name="Andrieux J."/>
            <person name="Zhu W."/>
            <person name="He W."/>
            <person name="Vetrini F."/>
            <person name="Ward P.A."/>
            <person name="Cheung S.W."/>
            <person name="Bi W."/>
            <person name="Eng C.M."/>
            <person name="Lupski J.R."/>
            <person name="Yang Y."/>
            <person name="Patel A."/>
            <person name="Lalani S.R."/>
            <person name="Xia F."/>
            <person name="Stankiewicz P."/>
        </authorList>
    </citation>
    <scope>INVOLVEMENT IN CLABARS</scope>
    <scope>VARIANTS CLABARS VAL-761 AND 1449-PRO--SER-1992 DEL</scope>
</reference>
<reference key="24">
    <citation type="journal article" date="2019" name="Mol. Cell">
        <title>An adversarial DNA N6-methyladenine-sensor network preserves Polycomb silencing.</title>
        <authorList>
            <person name="Kweon S.M."/>
            <person name="Chen Y."/>
            <person name="Moon E."/>
            <person name="Kvederaviciute K."/>
            <person name="Klimasauskas S."/>
            <person name="Feldman D.E."/>
        </authorList>
    </citation>
    <scope>FUNCTION</scope>
    <scope>CATALYTIC ACTIVITY</scope>
</reference>
<gene>
    <name type="primary">TRIP12</name>
    <name type="synonym">KIAA0045</name>
    <name type="synonym">ULF</name>
</gene>
<comment type="function">
    <text evidence="6 7 8 9 11 14">E3 ubiquitin-protein ligase involved in ubiquitin fusion degradation (UFD) pathway and regulation of DNA repair (PubMed:19028681, PubMed:22884692). Part of the ubiquitin fusion degradation (UFD) pathway, a process that mediates ubiquitination of protein at their N-terminus, regardless of the presence of lysine residues in target proteins (PubMed:19028681). Acts as a key regulator of DNA damage response by acting as a suppressor of RNF168, an E3 ubiquitin-protein ligase that promotes accumulation of 'Lys-63'-linked histone H2A and H2AX at DNA damage sites, thereby acting as a guard against excessive spreading of ubiquitinated chromatin at damaged chromosomes (PubMed:22884692). In normal cells, mediates ubiquitination and degradation of isoform p19ARF/ARF of CDKN2A, a lysine-less tumor suppressor required for p53/TP53 activation under oncogenic stress (PubMed:20208519). In cancer cells, however, isoform p19ARF/ARF and TRIP12 are located in different cell compartments, preventing isoform p19ARF/ARF ubiquitination and degradation (PubMed:20208519). Does not mediate ubiquitination of isoform p16-INK4a of CDKN2A (PubMed:20208519). Also catalyzes ubiquitination of NAE1 and SMARCE1, leading to their degradation (PubMed:18627766). Ubiquitination and degradation of target proteins is regulated by interaction with proteins such as MYC, TRADD or SMARCC1, which disrupt the interaction between TRIP12 and target proteins (PubMed:20829358). Mediates ubiquitination of ASXL1: following binding to N(6)-methyladenosine methylated DNA, ASXL1 is ubiquitinated by TRIP12, leading to its degradation and subsequent inactivation of the PR-DUB complex (PubMed:30982744).</text>
</comment>
<comment type="catalytic activity">
    <reaction evidence="6 8 14">
        <text>S-ubiquitinyl-[E2 ubiquitin-conjugating enzyme]-L-cysteine + [acceptor protein]-L-lysine = [E2 ubiquitin-conjugating enzyme]-L-cysteine + N(6)-ubiquitinyl-[acceptor protein]-L-lysine.</text>
        <dbReference type="EC" id="2.3.2.26"/>
    </reaction>
</comment>
<comment type="pathway">
    <text evidence="6 8 14">Protein modification; protein ubiquitination.</text>
</comment>
<comment type="subunit">
    <text evidence="8 9 10">Interacts with MYC; leading to disrupt interaction with isoform p19ARF/ARF of CDKN2A (PubMed:20208519). Interacts with TRADD; leading to disrupt interaction with isoform p19ARF/ARF of CDKN2A (PubMed:22561347). Interacts with SMARCC1; leading to disrupt interaction with SMARCE1 (PubMed:20829358).</text>
</comment>
<comment type="interaction">
    <interactant intactId="EBI-308443">
        <id>Q14669</id>
    </interactant>
    <interactant intactId="EBI-625922">
        <id>Q8N726</id>
        <label>CDKN2A</label>
    </interactant>
    <organismsDiffer>false</organismsDiffer>
    <experiments>4</experiments>
</comment>
<comment type="interaction">
    <interactant intactId="EBI-308443">
        <id>Q14669</id>
    </interactant>
    <interactant intactId="EBI-1053596">
        <id>Q13627</id>
        <label>DYRK1A</label>
    </interactant>
    <organismsDiffer>false</organismsDiffer>
    <experiments>2</experiments>
</comment>
<comment type="interaction">
    <interactant intactId="EBI-308443">
        <id>Q14669</id>
    </interactant>
    <interactant intactId="EBI-1188341">
        <id>P49286</id>
        <label>MTNR1B</label>
    </interactant>
    <organismsDiffer>false</organismsDiffer>
    <experiments>3</experiments>
</comment>
<comment type="interaction">
    <interactant intactId="EBI-308443">
        <id>Q14669</id>
    </interactant>
    <interactant intactId="EBI-447544">
        <id>P01106</id>
        <label>MYC</label>
    </interactant>
    <organismsDiffer>false</organismsDiffer>
    <experiments>7</experiments>
</comment>
<comment type="interaction">
    <interactant intactId="EBI-308443">
        <id>Q14669</id>
    </interactant>
    <interactant intactId="EBI-354150">
        <id>P06748-1</id>
        <label>NPM1</label>
    </interactant>
    <organismsDiffer>false</organismsDiffer>
    <experiments>2</experiments>
</comment>
<comment type="subcellular location">
    <subcellularLocation>
        <location evidence="8">Nucleus</location>
        <location evidence="8">Nucleoplasm</location>
    </subcellularLocation>
</comment>
<comment type="alternative products">
    <event type="alternative splicing"/>
    <isoform>
        <id>Q14669-1</id>
        <name>1</name>
        <sequence type="displayed"/>
    </isoform>
    <isoform>
        <id>Q14669-2</id>
        <name>2</name>
        <sequence type="described" ref="VSP_044328 VSP_044329"/>
    </isoform>
    <isoform>
        <id>Q14669-3</id>
        <name>3</name>
        <sequence type="described" ref="VSP_044326 VSP_044328"/>
    </isoform>
    <isoform>
        <id>Q14669-4</id>
        <name>4</name>
        <sequence type="described" ref="VSP_044327 VSP_044328 VSP_044329"/>
    </isoform>
</comment>
<comment type="disease" evidence="12 13">
    <disease id="DI-05132">
        <name>Clark-Baraitser syndrome</name>
        <acronym>CLABARS</acronym>
        <description>An autosomal dominant disease characterized by intellectual disability, delayed psychomotor development, behavioral abnormalities, variable dysmorphic facial features, tall stature, obesity, and macrocephaly.</description>
        <dbReference type="MIM" id="617752"/>
    </disease>
    <text>The disease is caused by variants affecting the gene represented in this entry.</text>
</comment>
<comment type="similarity">
    <text evidence="17">Belongs to the UPL family. K-HECT subfamily.</text>
</comment>
<comment type="sequence caution" evidence="17">
    <conflict type="erroneous gene model prediction">
        <sequence resource="EMBL-CDS" id="AAY14681"/>
    </conflict>
</comment>
<comment type="sequence caution" evidence="17">
    <conflict type="erroneous gene model prediction">
        <sequence resource="EMBL-CDS" id="AAY14755"/>
    </conflict>
</comment>
<comment type="sequence caution" evidence="17">
    <conflict type="erroneous initiation">
        <sequence resource="EMBL-CDS" id="BAA05837"/>
    </conflict>
    <text>Extended N-terminus.</text>
</comment>
<sequence>MSNRPNNNPGGSLRRSQRNTAGAQPQDDSIGGRSCSSSSAVIVPQPEDPDRANTSERQKTGQVPKKDNSRGVKRSASPDYNRTNSPSSAKKPKALQHTESPSETNKPHSKSKKRHLDQEQQLKSAQSPSTSKAHTRKSGATGGSRSQKRKRTESSCVKSGSGSESTGAEERSAKPTKLASKSATSAKAGCSTITDSSSAASTSSSSSAVASASSTVPPGARVKQGKDQNKARRSRSASSPSPRRSSREKEQSKTGGSSKFDWAARFSPKVSLPKTKLSLPGSSKSETSKPGPSGLQAKLASLRKSTKKRSESPPAELPSLRRSTRQKTTGSCASTSRRGSGLGKRGAAEARRQEKMADPESNQEAVNSSAARTDEAPQGAAGAVGMTTSGESESDDSEMGRLQALLEARGLPPHLFGPLGPRMSQLFHRTIGSGASSKAQQLLQGLQASDESQQLQAVIEMCQLLVMGNEETLGGFPVKSVVPALITLLQMEHNFDIMNHACRALTYMMEALPRSSAVVVDAIPVFLEKLQVIQCIDVAEQALTALEMLSRRHSKAILQAGGLADCLLYLEFFSINAQRNALAIAANCCQSITPDEFHFVADSLPLLTQRLTHQDKKSVESTCLCFARLVDNFQHEENLLQQVASKDLLTNVQQLLVVTPPILSSGMFIMVVRMFSLMCSNCPTLAVQLMKQNIAETLHFLLCGASNGSCQEQIDLVPRSPQELYELTSLICELMPCLPKEGIFAVDTMLKKGNAQNTDGAIWQWRDDRGLWHPYNRIDSRIIEQINEDTGTARAIQRKPNPLANSNTSGYSESKKDDARAQLMKEDPELAKSFIKTLFGVLYEVYSSSAGPAVRHKCLRAILRIIYFADAELLKDVLKNHAVSSHIASMLSSQDLKIVVGALQMAEILMQKLPDIFSVYFRREGVMHQVKHLAESESLLTSPPKACTNGSGSMGSTTSVSSGTATAATHAAADLGSPSLQHSRDDSLDLSPQGRLSDVLKRKRLPKRGPRRPKYSPPRDDDKVDNQAKSPTTTQSPKSSFLASLNPKTWGRLSTQSNSNNIEPARTAGGSGLARAASKDTISNNREKIKGWIKEQAHKFVERYFSSENMDGSNPALNVLQRLCAATEQLNLQVDGGAECLVEIRSIVSESDVSSFEIQHSGFVKQLLLYLTSKSEKDAVSREIRLKRFLHVFFSSPLPGEEPIGRVEPVGNAPLLALVHKMNNCLSQMEQFPVKVHDFPSGNGTGGSFSLNRGSQALKFFNTHQLKCQLQRHPDCANVKQWKGGPVKIDPLALVQAIERYLVVRGYGRVREDDEDSDDDGSDEEIDESLAAQFLNSGNVRHRLQFYIGEHLLPYNMTVYQAVRQFSIQAEDERESTDDESNPLGRAGIWTKTHTIWYKPVREDEESNKDCVGGKRGRAQTAPTKTSPRNAKKHDELWHDGVCPSVSNPLEVYLIPTPPENITFEDPSLDVILLLRVLHAISRYWYYLYDNAMCKEIIPTSEFINSKLTAKANRQLQDPLVIMTGNIPTWLTELGKTCPFFFPFDTRQMLFYVTAFDRDRAMQRLLDTNPEINQSDSQDSRVAPRLDRKKRTVNREELLKQAESVMQDLGSSRAMLEIQYENEVGTGLGPTLEFYALVSQELQRADLGLWRGEEVTLSNPKGSQEGTKYIQNLQGLFALPFGRTAKPAHIAKVKMKFRFLGKLMAKAIMDFRLVDLPLGLPFYKWMLRQETSLTSHDLFDIDPVVARSVYHLEDIVRQKKRLEQDKSQTKESLQYALETLTMNGCSVEDLGLDFTLPGFPNIELKKGGKDIPVTIHNLEEYLRLVIFWALNEGVSRQFDSFRDGFESVFPLSHLQYFYPEELDQLLCGSKADTWDAKTLMECCRPDHGYTHDSRAVKFLFEILSSFDNEQQRLFLQFVTGSPRLPVGGFRSLNPPLTIVRKTFESTENPDDFLPSVMTCVNYLKLPDYSSIEIMREKLLIAAREGQQSFHLS</sequence>
<protein>
    <recommendedName>
        <fullName>E3 ubiquitin-protein ligase TRIP12</fullName>
        <ecNumber evidence="6 8 14">2.3.2.26</ecNumber>
    </recommendedName>
    <alternativeName>
        <fullName>E3 ubiquitin-protein ligase for Arf</fullName>
        <shortName>ULF</shortName>
    </alternativeName>
    <alternativeName>
        <fullName>HECT-type E3 ubiquitin transferase TRIP12</fullName>
    </alternativeName>
    <alternativeName>
        <fullName>Thyroid receptor-interacting protein 12</fullName>
        <shortName>TR-interacting protein 12</shortName>
        <shortName>TRIP-12</shortName>
    </alternativeName>
</protein>
<organism>
    <name type="scientific">Homo sapiens</name>
    <name type="common">Human</name>
    <dbReference type="NCBI Taxonomy" id="9606"/>
    <lineage>
        <taxon>Eukaryota</taxon>
        <taxon>Metazoa</taxon>
        <taxon>Chordata</taxon>
        <taxon>Craniata</taxon>
        <taxon>Vertebrata</taxon>
        <taxon>Euteleostomi</taxon>
        <taxon>Mammalia</taxon>
        <taxon>Eutheria</taxon>
        <taxon>Euarchontoglires</taxon>
        <taxon>Primates</taxon>
        <taxon>Haplorrhini</taxon>
        <taxon>Catarrhini</taxon>
        <taxon>Hominidae</taxon>
        <taxon>Homo</taxon>
    </lineage>
</organism>
<keyword id="KW-0002">3D-structure</keyword>
<keyword id="KW-0007">Acetylation</keyword>
<keyword id="KW-0025">Alternative splicing</keyword>
<keyword id="KW-1268">Autism spectrum disorder</keyword>
<keyword id="KW-0225">Disease variant</keyword>
<keyword id="KW-0227">DNA damage</keyword>
<keyword id="KW-0234">DNA repair</keyword>
<keyword id="KW-0991">Intellectual disability</keyword>
<keyword id="KW-0539">Nucleus</keyword>
<keyword id="KW-0597">Phosphoprotein</keyword>
<keyword id="KW-1267">Proteomics identification</keyword>
<keyword id="KW-1185">Reference proteome</keyword>
<keyword id="KW-0808">Transferase</keyword>
<keyword id="KW-0833">Ubl conjugation pathway</keyword>
<evidence type="ECO:0000250" key="1">
    <source>
        <dbReference type="UniProtKB" id="F1LP64"/>
    </source>
</evidence>
<evidence type="ECO:0000250" key="2">
    <source>
        <dbReference type="UniProtKB" id="G5E870"/>
    </source>
</evidence>
<evidence type="ECO:0000255" key="3">
    <source>
        <dbReference type="PROSITE-ProRule" id="PRU00104"/>
    </source>
</evidence>
<evidence type="ECO:0000255" key="4">
    <source>
        <dbReference type="PROSITE-ProRule" id="PRU00248"/>
    </source>
</evidence>
<evidence type="ECO:0000256" key="5">
    <source>
        <dbReference type="SAM" id="MobiDB-lite"/>
    </source>
</evidence>
<evidence type="ECO:0000269" key="6">
    <source>
    </source>
</evidence>
<evidence type="ECO:0000269" key="7">
    <source>
    </source>
</evidence>
<evidence type="ECO:0000269" key="8">
    <source>
    </source>
</evidence>
<evidence type="ECO:0000269" key="9">
    <source>
    </source>
</evidence>
<evidence type="ECO:0000269" key="10">
    <source>
    </source>
</evidence>
<evidence type="ECO:0000269" key="11">
    <source>
    </source>
</evidence>
<evidence type="ECO:0000269" key="12">
    <source>
    </source>
</evidence>
<evidence type="ECO:0000269" key="13">
    <source>
    </source>
</evidence>
<evidence type="ECO:0000269" key="14">
    <source>
    </source>
</evidence>
<evidence type="ECO:0000303" key="15">
    <source>
    </source>
</evidence>
<evidence type="ECO:0000303" key="16">
    <source>
    </source>
</evidence>
<evidence type="ECO:0000305" key="17"/>
<evidence type="ECO:0007744" key="18">
    <source>
    </source>
</evidence>
<evidence type="ECO:0007744" key="19">
    <source>
    </source>
</evidence>
<evidence type="ECO:0007744" key="20">
    <source>
    </source>
</evidence>
<evidence type="ECO:0007744" key="21">
    <source>
    </source>
</evidence>
<evidence type="ECO:0007744" key="22">
    <source>
    </source>
</evidence>
<evidence type="ECO:0007744" key="23">
    <source>
    </source>
</evidence>
<evidence type="ECO:0007744" key="24">
    <source>
    </source>
</evidence>
<evidence type="ECO:0007829" key="25">
    <source>
        <dbReference type="PDB" id="9BKS"/>
    </source>
</evidence>
<name>TRIPC_HUMAN</name>
<feature type="initiator methionine" description="Removed" evidence="22">
    <location>
        <position position="1"/>
    </location>
</feature>
<feature type="chain" id="PRO_0000173872" description="E3 ubiquitin-protein ligase TRIP12">
    <location>
        <begin position="2"/>
        <end position="1992"/>
    </location>
</feature>
<feature type="domain" description="WWE" evidence="4">
    <location>
        <begin position="749"/>
        <end position="836"/>
    </location>
</feature>
<feature type="domain" description="HECT" evidence="3">
    <location>
        <begin position="1885"/>
        <end position="1992"/>
    </location>
</feature>
<feature type="region of interest" description="Disordered" evidence="5">
    <location>
        <begin position="1"/>
        <end position="398"/>
    </location>
</feature>
<feature type="region of interest" description="Disordered" evidence="5">
    <location>
        <begin position="797"/>
        <end position="817"/>
    </location>
</feature>
<feature type="region of interest" description="Disordered" evidence="5">
    <location>
        <begin position="938"/>
        <end position="1080"/>
    </location>
</feature>
<feature type="region of interest" description="Disordered" evidence="5">
    <location>
        <begin position="1407"/>
        <end position="1433"/>
    </location>
</feature>
<feature type="region of interest" description="K-box">
    <location>
        <begin position="1496"/>
        <end position="1570"/>
    </location>
</feature>
<feature type="region of interest" description="Disordered" evidence="5">
    <location>
        <begin position="1568"/>
        <end position="1587"/>
    </location>
</feature>
<feature type="compositionally biased region" description="Polar residues" evidence="5">
    <location>
        <begin position="1"/>
        <end position="10"/>
    </location>
</feature>
<feature type="compositionally biased region" description="Polar residues" evidence="5">
    <location>
        <begin position="18"/>
        <end position="27"/>
    </location>
</feature>
<feature type="compositionally biased region" description="Basic and acidic residues" evidence="5">
    <location>
        <begin position="48"/>
        <end position="70"/>
    </location>
</feature>
<feature type="compositionally biased region" description="Polar residues" evidence="5">
    <location>
        <begin position="78"/>
        <end position="88"/>
    </location>
</feature>
<feature type="compositionally biased region" description="Polar residues" evidence="5">
    <location>
        <begin position="119"/>
        <end position="132"/>
    </location>
</feature>
<feature type="compositionally biased region" description="Low complexity" evidence="5">
    <location>
        <begin position="154"/>
        <end position="166"/>
    </location>
</feature>
<feature type="compositionally biased region" description="Low complexity" evidence="5">
    <location>
        <begin position="175"/>
        <end position="216"/>
    </location>
</feature>
<feature type="compositionally biased region" description="Polar residues" evidence="5">
    <location>
        <begin position="280"/>
        <end position="290"/>
    </location>
</feature>
<feature type="compositionally biased region" description="Polar residues" evidence="5">
    <location>
        <begin position="326"/>
        <end position="338"/>
    </location>
</feature>
<feature type="compositionally biased region" description="Basic and acidic residues" evidence="5">
    <location>
        <begin position="346"/>
        <end position="358"/>
    </location>
</feature>
<feature type="compositionally biased region" description="Polar residues" evidence="5">
    <location>
        <begin position="360"/>
        <end position="371"/>
    </location>
</feature>
<feature type="compositionally biased region" description="Polar residues" evidence="5">
    <location>
        <begin position="803"/>
        <end position="812"/>
    </location>
</feature>
<feature type="compositionally biased region" description="Low complexity" evidence="5">
    <location>
        <begin position="948"/>
        <end position="973"/>
    </location>
</feature>
<feature type="compositionally biased region" description="Basic residues" evidence="5">
    <location>
        <begin position="1001"/>
        <end position="1014"/>
    </location>
</feature>
<feature type="compositionally biased region" description="Basic and acidic residues" evidence="5">
    <location>
        <begin position="1017"/>
        <end position="1026"/>
    </location>
</feature>
<feature type="compositionally biased region" description="Low complexity" evidence="5">
    <location>
        <begin position="1029"/>
        <end position="1040"/>
    </location>
</feature>
<feature type="compositionally biased region" description="Polar residues" evidence="5">
    <location>
        <begin position="1041"/>
        <end position="1062"/>
    </location>
</feature>
<feature type="active site" description="Glycyl thioester intermediate" evidence="17">
    <location>
        <position position="1959"/>
    </location>
</feature>
<feature type="modified residue" description="N-acetylserine" evidence="22">
    <location>
        <position position="2"/>
    </location>
</feature>
<feature type="modified residue" description="Phosphoserine" evidence="22 23">
    <location>
        <position position="12"/>
    </location>
</feature>
<feature type="modified residue" description="Phosphoserine" evidence="21">
    <location>
        <position position="77"/>
    </location>
</feature>
<feature type="modified residue" description="Phosphoserine" evidence="2">
    <location>
        <position position="85"/>
    </location>
</feature>
<feature type="modified residue" description="Phosphoserine" evidence="23">
    <location>
        <position position="100"/>
    </location>
</feature>
<feature type="modified residue" description="N6-acetyllysine" evidence="2">
    <location>
        <position position="181"/>
    </location>
</feature>
<feature type="modified residue" description="Phosphoserine" evidence="19 22">
    <location>
        <position position="310"/>
    </location>
</feature>
<feature type="modified residue" description="Phosphoserine" evidence="19 20 21 23">
    <location>
        <position position="312"/>
    </location>
</feature>
<feature type="modified residue" description="Phosphoserine" evidence="21 23">
    <location>
        <position position="942"/>
    </location>
</feature>
<feature type="modified residue" description="Phosphoserine" evidence="19 20 23">
    <location>
        <position position="991"/>
    </location>
</feature>
<feature type="modified residue" description="Phosphoserine" evidence="19 23">
    <location>
        <position position="997"/>
    </location>
</feature>
<feature type="modified residue" description="Phosphoserine" evidence="1">
    <location>
        <position position="1016"/>
    </location>
</feature>
<feature type="modified residue" description="Phosphoserine" evidence="22">
    <location>
        <position position="1030"/>
    </location>
</feature>
<feature type="modified residue" description="Phosphoserine" evidence="18 19 20 22 24">
    <location>
        <position position="1317"/>
    </location>
</feature>
<feature type="modified residue" description="Phosphoserine" evidence="19 20 22 24">
    <location>
        <position position="1322"/>
    </location>
</feature>
<feature type="modified residue" description="Phosphoserine" evidence="2">
    <location>
        <position position="1329"/>
    </location>
</feature>
<feature type="modified residue" description="Phosphoserine" evidence="1">
    <location>
        <position position="1376"/>
    </location>
</feature>
<feature type="modified residue" description="Phosphothreonine" evidence="1">
    <location>
        <position position="1377"/>
    </location>
</feature>
<feature type="modified residue" description="N6-acetyllysine" evidence="2">
    <location>
        <position position="1425"/>
    </location>
</feature>
<feature type="modified residue" description="Phosphoserine" evidence="2">
    <location>
        <position position="1427"/>
    </location>
</feature>
<feature type="splice variant" id="VSP_044326" description="In isoform 3." evidence="15">
    <original>G</original>
    <variation>GRSHLGQAKHKGYSPPESRKSNSKAPKVQSNTTSELSRGHLSK</variation>
    <location>
        <position position="32"/>
    </location>
</feature>
<feature type="splice variant" id="VSP_044327" description="In isoform 4." evidence="15">
    <location>
        <begin position="33"/>
        <end position="335"/>
    </location>
</feature>
<feature type="splice variant" id="VSP_044328" description="In isoform 2, isoform 3 and isoform 4." evidence="15 16">
    <original>A</original>
    <variation>AAASSSV</variation>
    <location>
        <position position="380"/>
    </location>
</feature>
<feature type="splice variant" id="VSP_044329" description="In isoform 2 and isoform 4." evidence="15 16">
    <original>E</original>
    <variation>EAAHQVGEDEISLSTLGRVYTIDFNSMQ</variation>
    <location>
        <position position="784"/>
    </location>
</feature>
<feature type="sequence variant" id="VAR_080431" description="In CLABARS; uncertain significance; dbSNP:rs1300458163." evidence="12">
    <original>P</original>
    <variation>L</variation>
    <location>
        <position position="5"/>
    </location>
</feature>
<feature type="sequence variant" id="VAR_080432" description="In CLABARS; uncertain significance." evidence="12">
    <location>
        <begin position="338"/>
        <end position="1992"/>
    </location>
</feature>
<feature type="sequence variant" id="VAR_080433" description="In CLABARS; uncertain significance." evidence="12">
    <location>
        <begin position="352"/>
        <end position="1992"/>
    </location>
</feature>
<feature type="sequence variant" id="VAR_080434" description="In CLABARS; dbSNP:rs373429636." evidence="12 13">
    <original>A</original>
    <variation>V</variation>
    <location>
        <position position="761"/>
    </location>
</feature>
<feature type="sequence variant" id="VAR_080435" description="In CLABARS." evidence="13">
    <location>
        <begin position="1449"/>
        <end position="1992"/>
    </location>
</feature>
<feature type="sequence variant" id="VAR_080436" description="In CLABARS." evidence="12">
    <original>D</original>
    <variation>H</variation>
    <location>
        <position position="1557"/>
    </location>
</feature>
<feature type="sequence variant" id="VAR_080437" description="In CLABARS; dbSNP:rs1553602821." evidence="12">
    <original>R</original>
    <variation>Q</variation>
    <location>
        <position position="1595"/>
    </location>
</feature>
<feature type="sequence variant" id="VAR_080438" description="In CLABARS; dbSNP:rs866079762." evidence="12">
    <original>S</original>
    <variation>L</variation>
    <location>
        <position position="1840"/>
    </location>
</feature>
<feature type="mutagenesis site" description="Abolishes E3 ubiquitin-protein ligase activity." evidence="8">
    <original>C</original>
    <variation>A</variation>
    <location>
        <position position="1959"/>
    </location>
</feature>
<feature type="sequence conflict" description="In Ref. 5; AAC41731." evidence="17" ref="5">
    <original>SSIEIMREKLLIAAREGQQSFHLS</original>
    <variation>QALRYA</variation>
    <location>
        <begin position="1969"/>
        <end position="1992"/>
    </location>
</feature>
<feature type="strand" evidence="25">
    <location>
        <begin position="761"/>
        <end position="766"/>
    </location>
</feature>
<feature type="strand" evidence="25">
    <location>
        <begin position="772"/>
        <end position="774"/>
    </location>
</feature>
<feature type="helix" evidence="25">
    <location>
        <begin position="777"/>
        <end position="784"/>
    </location>
</feature>
<feature type="strand" evidence="25">
    <location>
        <begin position="785"/>
        <end position="787"/>
    </location>
</feature>
<feature type="turn" evidence="25">
    <location>
        <begin position="788"/>
        <end position="790"/>
    </location>
</feature>
<feature type="strand" evidence="25">
    <location>
        <begin position="793"/>
        <end position="800"/>
    </location>
</feature>
<feature type="sequence conflict" description="In Ref. 1; ACC99349." evidence="17" ref="1">
    <original>A</original>
    <variation>T</variation>
    <location sequence="Q14669-2">
        <position position="380"/>
    </location>
</feature>
<proteinExistence type="evidence at protein level"/>